<keyword id="KW-0903">Direct protein sequencing</keyword>
<keyword id="KW-1015">Disulfide bond</keyword>
<keyword id="KW-0378">Hydrolase</keyword>
<keyword id="KW-0645">Protease</keyword>
<keyword id="KW-0964">Secreted</keyword>
<keyword id="KW-0720">Serine protease</keyword>
<keyword id="KW-0732">Signal</keyword>
<keyword id="KW-0865">Zymogen</keyword>
<accession>Q03424</accession>
<name>SFAS1_STRFR</name>
<reference key="1">
    <citation type="journal article" date="1993" name="Biochim. Biophys. Acta">
        <title>Purification, characterization and molecular cloning of an acidic amino acid-specific proteinase from Streptomyces fradiae ATCC 14544.</title>
        <authorList>
            <person name="Kitadokoro K."/>
            <person name="Nakamura E."/>
            <person name="Tamaki M."/>
            <person name="Horii T."/>
            <person name="Okamoto H."/>
            <person name="Shin M."/>
            <person name="Sato T."/>
            <person name="Fujiwara T."/>
            <person name="Tsuzuki H."/>
            <person name="Yoshida N."/>
            <person name="Teraoka H."/>
        </authorList>
    </citation>
    <scope>NUCLEOTIDE SEQUENCE [GENOMIC DNA]</scope>
    <scope>PARTIAL PROTEIN SEQUENCE</scope>
    <scope>FUNCTION</scope>
    <source>
        <strain>ATCC 14544 / DSM 40758 / IMRU 3739 / NCIMB 11726 / NRRL B-2841</strain>
    </source>
</reference>
<reference key="2">
    <citation type="journal article" date="1994" name="Eur. J. Biochem.">
        <title>Crystal structure analysis of a serine proteinase from Streptomyces fradiae at 0.16-nm resolution and molecular modeling of an acidic-amino-acid-specific proteinase.</title>
        <authorList>
            <person name="Kitadokoro K."/>
            <person name="Tsuzuki H."/>
            <person name="Okamoto H."/>
            <person name="Sato T."/>
        </authorList>
    </citation>
    <scope>3D-STRUCTURE MODELING</scope>
</reference>
<protein>
    <recommendedName>
        <fullName>Serine protease 1</fullName>
        <ecNumber>3.4.21.-</ecNumber>
    </recommendedName>
    <alternativeName>
        <fullName>Glutamic acid-specific protease</fullName>
    </alternativeName>
    <alternativeName>
        <fullName>SFase-1</fullName>
    </alternativeName>
</protein>
<proteinExistence type="evidence at protein level"/>
<organism>
    <name type="scientific">Streptomyces fradiae</name>
    <name type="common">Streptomyces roseoflavus</name>
    <dbReference type="NCBI Taxonomy" id="1906"/>
    <lineage>
        <taxon>Bacteria</taxon>
        <taxon>Bacillati</taxon>
        <taxon>Actinomycetota</taxon>
        <taxon>Actinomycetes</taxon>
        <taxon>Kitasatosporales</taxon>
        <taxon>Streptomycetaceae</taxon>
        <taxon>Streptomyces</taxon>
    </lineage>
</organism>
<sequence>MRRTTRARTGLSALLLAASLGLGAAPAGADAPQRPAPTPASDSAAALHALDAAVERTLGDDSAGTYVDAGTGELVVTVTTEAAAAKVRAAGATPRRVQRGAAELDAAMAALEARAKIPGTSWGLDPRTNRIAVEADSSVSARDLARLRKVAASLDGAVSVTRVPGVFQREVAGGDAIYGGGSRCSAAFNVTKNGVRYFLTAGHCTNLSSTWSSTSGGTSIGVREGTSFPTNDYGIVRYTTTTNVDGRVNLYNGGYQDIASAADAVVGQAIKKSGSTTKVTSGTVSAVNVTVNYSDGPVYGMVRTTACSAGGDSGGAHFAGSVALGIHSGSSGCTGTNGSAIHQPVREALSAYGVNVY</sequence>
<dbReference type="EC" id="3.4.21.-"/>
<dbReference type="EMBL" id="D12470">
    <property type="protein sequence ID" value="BAA02038.1"/>
    <property type="molecule type" value="Genomic_DNA"/>
</dbReference>
<dbReference type="PIR" id="S33321">
    <property type="entry name" value="S33321"/>
</dbReference>
<dbReference type="RefSeq" id="WP_359281966.1">
    <property type="nucleotide sequence ID" value="NZ_JBEZVU010000012.1"/>
</dbReference>
<dbReference type="SMR" id="Q03424"/>
<dbReference type="MEROPS" id="S01.267"/>
<dbReference type="GO" id="GO:0005576">
    <property type="term" value="C:extracellular region"/>
    <property type="evidence" value="ECO:0007669"/>
    <property type="project" value="UniProtKB-SubCell"/>
</dbReference>
<dbReference type="GO" id="GO:0004252">
    <property type="term" value="F:serine-type endopeptidase activity"/>
    <property type="evidence" value="ECO:0007669"/>
    <property type="project" value="InterPro"/>
</dbReference>
<dbReference type="GO" id="GO:0006508">
    <property type="term" value="P:proteolysis"/>
    <property type="evidence" value="ECO:0007669"/>
    <property type="project" value="UniProtKB-KW"/>
</dbReference>
<dbReference type="CDD" id="cd21112">
    <property type="entry name" value="alphaLP-like"/>
    <property type="match status" value="1"/>
</dbReference>
<dbReference type="Gene3D" id="3.30.300.50">
    <property type="match status" value="1"/>
</dbReference>
<dbReference type="Gene3D" id="2.40.10.10">
    <property type="entry name" value="Trypsin-like serine proteases"/>
    <property type="match status" value="2"/>
</dbReference>
<dbReference type="InterPro" id="IPR004236">
    <property type="entry name" value="Pept_S1_alpha_lytic"/>
</dbReference>
<dbReference type="InterPro" id="IPR001316">
    <property type="entry name" value="Pept_S1A_streptogrisin"/>
</dbReference>
<dbReference type="InterPro" id="IPR009003">
    <property type="entry name" value="Peptidase_S1_PA"/>
</dbReference>
<dbReference type="InterPro" id="IPR043504">
    <property type="entry name" value="Peptidase_S1_PA_chymotrypsin"/>
</dbReference>
<dbReference type="InterPro" id="IPR035070">
    <property type="entry name" value="Streptogrisin_prodomain"/>
</dbReference>
<dbReference type="InterPro" id="IPR001254">
    <property type="entry name" value="Trypsin_dom"/>
</dbReference>
<dbReference type="InterPro" id="IPR018114">
    <property type="entry name" value="TRYPSIN_HIS"/>
</dbReference>
<dbReference type="InterPro" id="IPR033116">
    <property type="entry name" value="TRYPSIN_SER"/>
</dbReference>
<dbReference type="Pfam" id="PF02983">
    <property type="entry name" value="Pro_Al_protease"/>
    <property type="match status" value="1"/>
</dbReference>
<dbReference type="Pfam" id="PF00089">
    <property type="entry name" value="Trypsin"/>
    <property type="match status" value="1"/>
</dbReference>
<dbReference type="PIRSF" id="PIRSF001134">
    <property type="entry name" value="Streptogrisin"/>
    <property type="match status" value="1"/>
</dbReference>
<dbReference type="PRINTS" id="PR00861">
    <property type="entry name" value="ALYTICPTASE"/>
</dbReference>
<dbReference type="SUPFAM" id="SSF50494">
    <property type="entry name" value="Trypsin-like serine proteases"/>
    <property type="match status" value="1"/>
</dbReference>
<dbReference type="PROSITE" id="PS00134">
    <property type="entry name" value="TRYPSIN_HIS"/>
    <property type="match status" value="1"/>
</dbReference>
<dbReference type="PROSITE" id="PS00135">
    <property type="entry name" value="TRYPSIN_SER"/>
    <property type="match status" value="1"/>
</dbReference>
<evidence type="ECO:0000250" key="1"/>
<evidence type="ECO:0000255" key="2"/>
<evidence type="ECO:0000269" key="3">
    <source>
    </source>
</evidence>
<evidence type="ECO:0000305" key="4"/>
<comment type="function">
    <text evidence="3">Serine protease that preferentially cleaves peptide bonds on the C-terminal side of aspartate and glutamate with a 10-fold higher reactivity for a glutamyl bond than an aspartyl bond.</text>
</comment>
<comment type="subcellular location">
    <subcellularLocation>
        <location>Secreted</location>
    </subcellularLocation>
</comment>
<comment type="similarity">
    <text evidence="4">Belongs to the peptidase S1 family.</text>
</comment>
<feature type="signal peptide" evidence="2">
    <location>
        <begin position="1"/>
        <end position="29"/>
    </location>
</feature>
<feature type="propeptide" id="PRO_0000026917" evidence="2">
    <location>
        <begin position="30"/>
        <end position="170"/>
    </location>
</feature>
<feature type="chain" id="PRO_0000026918" description="Serine protease 1">
    <location>
        <begin position="171"/>
        <end position="357"/>
    </location>
</feature>
<feature type="active site" description="Charge relay system" evidence="1">
    <location>
        <position position="203"/>
    </location>
</feature>
<feature type="active site" description="Charge relay system" evidence="1">
    <location>
        <position position="232"/>
    </location>
</feature>
<feature type="active site" description="Charge relay system" evidence="1">
    <location>
        <position position="313"/>
    </location>
</feature>
<feature type="disulfide bond" evidence="1">
    <location>
        <begin position="184"/>
        <end position="204"/>
    </location>
</feature>
<feature type="disulfide bond" evidence="1">
    <location>
        <begin position="307"/>
        <end position="333"/>
    </location>
</feature>